<proteinExistence type="evidence at protein level"/>
<reference key="1">
    <citation type="journal article" date="1997" name="Nature">
        <title>Genomic sequence of a Lyme disease spirochaete, Borrelia burgdorferi.</title>
        <authorList>
            <person name="Fraser C.M."/>
            <person name="Casjens S."/>
            <person name="Huang W.M."/>
            <person name="Sutton G.G."/>
            <person name="Clayton R.A."/>
            <person name="Lathigra R."/>
            <person name="White O."/>
            <person name="Ketchum K.A."/>
            <person name="Dodson R.J."/>
            <person name="Hickey E.K."/>
            <person name="Gwinn M.L."/>
            <person name="Dougherty B.A."/>
            <person name="Tomb J.-F."/>
            <person name="Fleischmann R.D."/>
            <person name="Richardson D.L."/>
            <person name="Peterson J.D."/>
            <person name="Kerlavage A.R."/>
            <person name="Quackenbush J."/>
            <person name="Salzberg S.L."/>
            <person name="Hanson M."/>
            <person name="van Vugt R."/>
            <person name="Palmer N."/>
            <person name="Adams M.D."/>
            <person name="Gocayne J.D."/>
            <person name="Weidman J.F."/>
            <person name="Utterback T.R."/>
            <person name="Watthey L."/>
            <person name="McDonald L.A."/>
            <person name="Artiach P."/>
            <person name="Bowman C."/>
            <person name="Garland S.A."/>
            <person name="Fujii C."/>
            <person name="Cotton M.D."/>
            <person name="Horst K."/>
            <person name="Roberts K.M."/>
            <person name="Hatch B."/>
            <person name="Smith H.O."/>
            <person name="Venter J.C."/>
        </authorList>
    </citation>
    <scope>NUCLEOTIDE SEQUENCE [LARGE SCALE GENOMIC DNA]</scope>
    <source>
        <strain>ATCC 35210 / DSM 4680 / CIP 102532 / B31</strain>
    </source>
</reference>
<protein>
    <recommendedName>
        <fullName evidence="1">Large ribosomal subunit protein uL18</fullName>
    </recommendedName>
    <alternativeName>
        <fullName evidence="3">50S ribosomal protein L18</fullName>
    </alternativeName>
</protein>
<organism>
    <name type="scientific">Borreliella burgdorferi (strain ATCC 35210 / DSM 4680 / CIP 102532 / B31)</name>
    <name type="common">Borrelia burgdorferi</name>
    <dbReference type="NCBI Taxonomy" id="224326"/>
    <lineage>
        <taxon>Bacteria</taxon>
        <taxon>Pseudomonadati</taxon>
        <taxon>Spirochaetota</taxon>
        <taxon>Spirochaetia</taxon>
        <taxon>Spirochaetales</taxon>
        <taxon>Borreliaceae</taxon>
        <taxon>Borreliella</taxon>
    </lineage>
</organism>
<dbReference type="EMBL" id="AE000783">
    <property type="protein sequence ID" value="AAC66848.1"/>
    <property type="molecule type" value="Genomic_DNA"/>
</dbReference>
<dbReference type="PIR" id="E70161">
    <property type="entry name" value="E70161"/>
</dbReference>
<dbReference type="RefSeq" id="NP_212628.1">
    <property type="nucleotide sequence ID" value="NC_001318.1"/>
</dbReference>
<dbReference type="RefSeq" id="WP_002657971.1">
    <property type="nucleotide sequence ID" value="NC_001318.1"/>
</dbReference>
<dbReference type="PDB" id="8FMW">
    <property type="method" value="EM"/>
    <property type="resolution" value="2.86 A"/>
    <property type="chains" value="AQ=1-119"/>
</dbReference>
<dbReference type="PDB" id="8FN2">
    <property type="method" value="EM"/>
    <property type="resolution" value="3.40 A"/>
    <property type="chains" value="Q=1-119"/>
</dbReference>
<dbReference type="PDBsum" id="8FMW"/>
<dbReference type="PDBsum" id="8FN2"/>
<dbReference type="EMDB" id="EMD-29298"/>
<dbReference type="EMDB" id="EMD-29304"/>
<dbReference type="SMR" id="O51447"/>
<dbReference type="STRING" id="224326.BB_0494"/>
<dbReference type="PaxDb" id="224326-BB_0494"/>
<dbReference type="EnsemblBacteria" id="AAC66848">
    <property type="protein sequence ID" value="AAC66848"/>
    <property type="gene ID" value="BB_0494"/>
</dbReference>
<dbReference type="GeneID" id="56567929"/>
<dbReference type="KEGG" id="bbu:BB_0494"/>
<dbReference type="PATRIC" id="fig|224326.49.peg.885"/>
<dbReference type="HOGENOM" id="CLU_098841_0_1_12"/>
<dbReference type="OrthoDB" id="9810939at2"/>
<dbReference type="Proteomes" id="UP000001807">
    <property type="component" value="Chromosome"/>
</dbReference>
<dbReference type="GO" id="GO:0022625">
    <property type="term" value="C:cytosolic large ribosomal subunit"/>
    <property type="evidence" value="ECO:0007669"/>
    <property type="project" value="TreeGrafter"/>
</dbReference>
<dbReference type="GO" id="GO:0008097">
    <property type="term" value="F:5S rRNA binding"/>
    <property type="evidence" value="ECO:0007669"/>
    <property type="project" value="TreeGrafter"/>
</dbReference>
<dbReference type="GO" id="GO:0003735">
    <property type="term" value="F:structural constituent of ribosome"/>
    <property type="evidence" value="ECO:0007669"/>
    <property type="project" value="InterPro"/>
</dbReference>
<dbReference type="GO" id="GO:0006412">
    <property type="term" value="P:translation"/>
    <property type="evidence" value="ECO:0007669"/>
    <property type="project" value="UniProtKB-UniRule"/>
</dbReference>
<dbReference type="CDD" id="cd00432">
    <property type="entry name" value="Ribosomal_L18_L5e"/>
    <property type="match status" value="1"/>
</dbReference>
<dbReference type="FunFam" id="3.30.420.100:FF:000001">
    <property type="entry name" value="50S ribosomal protein L18"/>
    <property type="match status" value="1"/>
</dbReference>
<dbReference type="Gene3D" id="3.30.420.100">
    <property type="match status" value="1"/>
</dbReference>
<dbReference type="HAMAP" id="MF_01337_B">
    <property type="entry name" value="Ribosomal_uL18_B"/>
    <property type="match status" value="1"/>
</dbReference>
<dbReference type="InterPro" id="IPR004389">
    <property type="entry name" value="Ribosomal_uL18_bac-type"/>
</dbReference>
<dbReference type="InterPro" id="IPR005484">
    <property type="entry name" value="Ribosomal_uL18_bac/euk"/>
</dbReference>
<dbReference type="NCBIfam" id="TIGR00060">
    <property type="entry name" value="L18_bact"/>
    <property type="match status" value="1"/>
</dbReference>
<dbReference type="PANTHER" id="PTHR12899">
    <property type="entry name" value="39S RIBOSOMAL PROTEIN L18, MITOCHONDRIAL"/>
    <property type="match status" value="1"/>
</dbReference>
<dbReference type="PANTHER" id="PTHR12899:SF3">
    <property type="entry name" value="LARGE RIBOSOMAL SUBUNIT PROTEIN UL18M"/>
    <property type="match status" value="1"/>
</dbReference>
<dbReference type="Pfam" id="PF00861">
    <property type="entry name" value="Ribosomal_L18p"/>
    <property type="match status" value="1"/>
</dbReference>
<dbReference type="SUPFAM" id="SSF53137">
    <property type="entry name" value="Translational machinery components"/>
    <property type="match status" value="1"/>
</dbReference>
<gene>
    <name evidence="1" type="primary">rplR</name>
    <name type="ordered locus">BB_0494</name>
</gene>
<evidence type="ECO:0000255" key="1">
    <source>
        <dbReference type="HAMAP-Rule" id="MF_01337"/>
    </source>
</evidence>
<evidence type="ECO:0000256" key="2">
    <source>
        <dbReference type="SAM" id="MobiDB-lite"/>
    </source>
</evidence>
<evidence type="ECO:0000305" key="3"/>
<evidence type="ECO:0007829" key="4">
    <source>
        <dbReference type="PDB" id="8FN2"/>
    </source>
</evidence>
<feature type="chain" id="PRO_0000131223" description="Large ribosomal subunit protein uL18">
    <location>
        <begin position="1"/>
        <end position="119"/>
    </location>
</feature>
<feature type="region of interest" description="Disordered" evidence="2">
    <location>
        <begin position="1"/>
        <end position="20"/>
    </location>
</feature>
<feature type="compositionally biased region" description="Basic and acidic residues" evidence="2">
    <location>
        <begin position="1"/>
        <end position="10"/>
    </location>
</feature>
<feature type="helix" evidence="4">
    <location>
        <begin position="2"/>
        <end position="22"/>
    </location>
</feature>
<feature type="strand" evidence="4">
    <location>
        <begin position="27"/>
        <end position="29"/>
    </location>
</feature>
<feature type="strand" evidence="4">
    <location>
        <begin position="31"/>
        <end position="36"/>
    </location>
</feature>
<feature type="strand" evidence="4">
    <location>
        <begin position="41"/>
        <end position="47"/>
    </location>
</feature>
<feature type="turn" evidence="4">
    <location>
        <begin position="48"/>
        <end position="51"/>
    </location>
</feature>
<feature type="strand" evidence="4">
    <location>
        <begin position="52"/>
        <end position="58"/>
    </location>
</feature>
<feature type="turn" evidence="4">
    <location>
        <begin position="62"/>
        <end position="64"/>
    </location>
</feature>
<feature type="helix" evidence="4">
    <location>
        <begin position="70"/>
        <end position="85"/>
    </location>
</feature>
<feature type="turn" evidence="4">
    <location>
        <begin position="86"/>
        <end position="88"/>
    </location>
</feature>
<feature type="strand" evidence="4">
    <location>
        <begin position="93"/>
        <end position="95"/>
    </location>
</feature>
<feature type="helix" evidence="4">
    <location>
        <begin position="104"/>
        <end position="113"/>
    </location>
</feature>
<feature type="turn" evidence="4">
    <location>
        <begin position="114"/>
        <end position="116"/>
    </location>
</feature>
<name>RL18_BORBU</name>
<keyword id="KW-0002">3D-structure</keyword>
<keyword id="KW-1185">Reference proteome</keyword>
<keyword id="KW-0687">Ribonucleoprotein</keyword>
<keyword id="KW-0689">Ribosomal protein</keyword>
<keyword id="KW-0694">RNA-binding</keyword>
<keyword id="KW-0699">rRNA-binding</keyword>
<accession>O51447</accession>
<comment type="function">
    <text evidence="1">This is one of the proteins that bind and probably mediate the attachment of the 5S RNA into the large ribosomal subunit, where it forms part of the central protuberance.</text>
</comment>
<comment type="subunit">
    <text evidence="1">Part of the 50S ribosomal subunit; part of the 5S rRNA/L5/L18/L25 subcomplex. Contacts the 5S and 23S rRNAs.</text>
</comment>
<comment type="similarity">
    <text evidence="1">Belongs to the universal ribosomal protein uL18 family.</text>
</comment>
<sequence>MKKIKEAEQRKLRRKKRIKDKIGRGVASRPRITVFKSNRYFYAQVIDDSKGHTIASISTIEKSLNLGKNIDDVKKLGEVLAKRLKEKNINNLIFDRNGYKYHGLIASFATSLREFGINI</sequence>